<feature type="chain" id="PRO_0000184837" description="3-methyl-2-oxobutanoate hydroxymethyltransferase">
    <location>
        <begin position="1"/>
        <end position="269"/>
    </location>
</feature>
<feature type="active site" description="Proton acceptor" evidence="1">
    <location>
        <position position="187"/>
    </location>
</feature>
<feature type="binding site" evidence="1">
    <location>
        <begin position="50"/>
        <end position="51"/>
    </location>
    <ligand>
        <name>3-methyl-2-oxobutanoate</name>
        <dbReference type="ChEBI" id="CHEBI:11851"/>
    </ligand>
</feature>
<feature type="binding site" evidence="1">
    <location>
        <position position="50"/>
    </location>
    <ligand>
        <name>Mg(2+)</name>
        <dbReference type="ChEBI" id="CHEBI:18420"/>
    </ligand>
</feature>
<feature type="binding site" evidence="1">
    <location>
        <position position="89"/>
    </location>
    <ligand>
        <name>3-methyl-2-oxobutanoate</name>
        <dbReference type="ChEBI" id="CHEBI:11851"/>
    </ligand>
</feature>
<feature type="binding site" evidence="1">
    <location>
        <position position="89"/>
    </location>
    <ligand>
        <name>Mg(2+)</name>
        <dbReference type="ChEBI" id="CHEBI:18420"/>
    </ligand>
</feature>
<feature type="binding site" evidence="1">
    <location>
        <position position="119"/>
    </location>
    <ligand>
        <name>3-methyl-2-oxobutanoate</name>
        <dbReference type="ChEBI" id="CHEBI:11851"/>
    </ligand>
</feature>
<feature type="binding site" evidence="1">
    <location>
        <position position="121"/>
    </location>
    <ligand>
        <name>Mg(2+)</name>
        <dbReference type="ChEBI" id="CHEBI:18420"/>
    </ligand>
</feature>
<name>PANB_COREF</name>
<evidence type="ECO:0000255" key="1">
    <source>
        <dbReference type="HAMAP-Rule" id="MF_00156"/>
    </source>
</evidence>
<evidence type="ECO:0000305" key="2"/>
<dbReference type="EC" id="2.1.2.11" evidence="1"/>
<dbReference type="EMBL" id="BA000035">
    <property type="protein sequence ID" value="BAC16926.1"/>
    <property type="status" value="ALT_INIT"/>
    <property type="molecule type" value="Genomic_DNA"/>
</dbReference>
<dbReference type="RefSeq" id="WP_006768577.1">
    <property type="nucleotide sequence ID" value="NC_004369.1"/>
</dbReference>
<dbReference type="SMR" id="Q8FUA5"/>
<dbReference type="STRING" id="196164.gene:10740506"/>
<dbReference type="KEGG" id="cef:CE0116"/>
<dbReference type="eggNOG" id="COG0413">
    <property type="taxonomic scope" value="Bacteria"/>
</dbReference>
<dbReference type="HOGENOM" id="CLU_036645_1_0_11"/>
<dbReference type="OrthoDB" id="9781789at2"/>
<dbReference type="UniPathway" id="UPA00028">
    <property type="reaction ID" value="UER00003"/>
</dbReference>
<dbReference type="Proteomes" id="UP000001409">
    <property type="component" value="Chromosome"/>
</dbReference>
<dbReference type="GO" id="GO:0005737">
    <property type="term" value="C:cytoplasm"/>
    <property type="evidence" value="ECO:0007669"/>
    <property type="project" value="UniProtKB-SubCell"/>
</dbReference>
<dbReference type="GO" id="GO:0003864">
    <property type="term" value="F:3-methyl-2-oxobutanoate hydroxymethyltransferase activity"/>
    <property type="evidence" value="ECO:0007669"/>
    <property type="project" value="UniProtKB-UniRule"/>
</dbReference>
<dbReference type="GO" id="GO:0000287">
    <property type="term" value="F:magnesium ion binding"/>
    <property type="evidence" value="ECO:0007669"/>
    <property type="project" value="TreeGrafter"/>
</dbReference>
<dbReference type="GO" id="GO:0015940">
    <property type="term" value="P:pantothenate biosynthetic process"/>
    <property type="evidence" value="ECO:0007669"/>
    <property type="project" value="UniProtKB-UniRule"/>
</dbReference>
<dbReference type="CDD" id="cd06557">
    <property type="entry name" value="KPHMT-like"/>
    <property type="match status" value="1"/>
</dbReference>
<dbReference type="FunFam" id="3.20.20.60:FF:000003">
    <property type="entry name" value="3-methyl-2-oxobutanoate hydroxymethyltransferase"/>
    <property type="match status" value="1"/>
</dbReference>
<dbReference type="Gene3D" id="3.20.20.60">
    <property type="entry name" value="Phosphoenolpyruvate-binding domains"/>
    <property type="match status" value="1"/>
</dbReference>
<dbReference type="HAMAP" id="MF_00156">
    <property type="entry name" value="PanB"/>
    <property type="match status" value="1"/>
</dbReference>
<dbReference type="InterPro" id="IPR003700">
    <property type="entry name" value="Pantoate_hydroxy_MeTrfase"/>
</dbReference>
<dbReference type="InterPro" id="IPR015813">
    <property type="entry name" value="Pyrv/PenolPyrv_kinase-like_dom"/>
</dbReference>
<dbReference type="InterPro" id="IPR040442">
    <property type="entry name" value="Pyrv_kinase-like_dom_sf"/>
</dbReference>
<dbReference type="NCBIfam" id="TIGR00222">
    <property type="entry name" value="panB"/>
    <property type="match status" value="1"/>
</dbReference>
<dbReference type="NCBIfam" id="NF001452">
    <property type="entry name" value="PRK00311.1"/>
    <property type="match status" value="1"/>
</dbReference>
<dbReference type="PANTHER" id="PTHR20881">
    <property type="entry name" value="3-METHYL-2-OXOBUTANOATE HYDROXYMETHYLTRANSFERASE"/>
    <property type="match status" value="1"/>
</dbReference>
<dbReference type="PANTHER" id="PTHR20881:SF0">
    <property type="entry name" value="3-METHYL-2-OXOBUTANOATE HYDROXYMETHYLTRANSFERASE"/>
    <property type="match status" value="1"/>
</dbReference>
<dbReference type="Pfam" id="PF02548">
    <property type="entry name" value="Pantoate_transf"/>
    <property type="match status" value="1"/>
</dbReference>
<dbReference type="PIRSF" id="PIRSF000388">
    <property type="entry name" value="Pantoate_hydroxy_MeTrfase"/>
    <property type="match status" value="1"/>
</dbReference>
<dbReference type="SUPFAM" id="SSF51621">
    <property type="entry name" value="Phosphoenolpyruvate/pyruvate domain"/>
    <property type="match status" value="1"/>
</dbReference>
<proteinExistence type="inferred from homology"/>
<reference key="1">
    <citation type="journal article" date="2003" name="Genome Res.">
        <title>Comparative complete genome sequence analysis of the amino acid replacements responsible for the thermostability of Corynebacterium efficiens.</title>
        <authorList>
            <person name="Nishio Y."/>
            <person name="Nakamura Y."/>
            <person name="Kawarabayasi Y."/>
            <person name="Usuda Y."/>
            <person name="Kimura E."/>
            <person name="Sugimoto S."/>
            <person name="Matsui K."/>
            <person name="Yamagishi A."/>
            <person name="Kikuchi H."/>
            <person name="Ikeo K."/>
            <person name="Gojobori T."/>
        </authorList>
    </citation>
    <scope>NUCLEOTIDE SEQUENCE [LARGE SCALE GENOMIC DNA]</scope>
    <source>
        <strain>DSM 44549 / YS-314 / AJ 12310 / JCM 11189 / NBRC 100395</strain>
    </source>
</reference>
<comment type="function">
    <text evidence="1">Catalyzes the reversible reaction in which hydroxymethyl group from 5,10-methylenetetrahydrofolate is transferred onto alpha-ketoisovalerate to form ketopantoate.</text>
</comment>
<comment type="catalytic activity">
    <reaction evidence="1">
        <text>3-methyl-2-oxobutanoate + (6R)-5,10-methylene-5,6,7,8-tetrahydrofolate + H2O = 2-dehydropantoate + (6S)-5,6,7,8-tetrahydrofolate</text>
        <dbReference type="Rhea" id="RHEA:11824"/>
        <dbReference type="ChEBI" id="CHEBI:11561"/>
        <dbReference type="ChEBI" id="CHEBI:11851"/>
        <dbReference type="ChEBI" id="CHEBI:15377"/>
        <dbReference type="ChEBI" id="CHEBI:15636"/>
        <dbReference type="ChEBI" id="CHEBI:57453"/>
        <dbReference type="EC" id="2.1.2.11"/>
    </reaction>
</comment>
<comment type="cofactor">
    <cofactor evidence="1">
        <name>Mg(2+)</name>
        <dbReference type="ChEBI" id="CHEBI:18420"/>
    </cofactor>
    <text evidence="1">Binds 1 Mg(2+) ion per subunit.</text>
</comment>
<comment type="pathway">
    <text evidence="1">Cofactor biosynthesis; (R)-pantothenate biosynthesis; (R)-pantoate from 3-methyl-2-oxobutanoate: step 1/2.</text>
</comment>
<comment type="subunit">
    <text evidence="1">Homodecamer; pentamer of dimers.</text>
</comment>
<comment type="subcellular location">
    <subcellularLocation>
        <location evidence="1">Cytoplasm</location>
    </subcellularLocation>
</comment>
<comment type="similarity">
    <text evidence="1">Belongs to the PanB family.</text>
</comment>
<comment type="sequence caution" evidence="2">
    <conflict type="erroneous initiation">
        <sequence resource="EMBL-CDS" id="BAC16926"/>
    </conflict>
</comment>
<organism>
    <name type="scientific">Corynebacterium efficiens (strain DSM 44549 / YS-314 / AJ 12310 / JCM 11189 / NBRC 100395)</name>
    <dbReference type="NCBI Taxonomy" id="196164"/>
    <lineage>
        <taxon>Bacteria</taxon>
        <taxon>Bacillati</taxon>
        <taxon>Actinomycetota</taxon>
        <taxon>Actinomycetes</taxon>
        <taxon>Mycobacteriales</taxon>
        <taxon>Corynebacteriaceae</taxon>
        <taxon>Corynebacterium</taxon>
    </lineage>
</organism>
<protein>
    <recommendedName>
        <fullName evidence="1">3-methyl-2-oxobutanoate hydroxymethyltransferase</fullName>
        <ecNumber evidence="1">2.1.2.11</ecNumber>
    </recommendedName>
    <alternativeName>
        <fullName evidence="1">Ketopantoate hydroxymethyltransferase</fullName>
        <shortName evidence="1">KPHMT</shortName>
    </alternativeName>
</protein>
<keyword id="KW-0963">Cytoplasm</keyword>
<keyword id="KW-0460">Magnesium</keyword>
<keyword id="KW-0479">Metal-binding</keyword>
<keyword id="KW-0566">Pantothenate biosynthesis</keyword>
<keyword id="KW-1185">Reference proteome</keyword>
<keyword id="KW-0808">Transferase</keyword>
<gene>
    <name evidence="1" type="primary">panB</name>
    <name type="ordered locus">CE0116</name>
</gene>
<sequence length="269" mass="28123">MSGIDAKKIRTRHIHEAKANGTKISVLTSYDAMTAAIFDEAGIDMLLVGDSAANVVLGRETTLSITLDEMIVLAKAVTIAAKRALVIVDLPFGTYEVSEQQAVESAVRVMRETGAAAVKIEGGVEMASTIRRIVDAGIPVCGHIGFTPQSEHALGGPVVQGRGSGADKLLADAHAVQAAGAFAVVLEMVPAEIATEVTNQLDIATIGIGAGNGTDGQVLVWQDAFGFNRGRKPRFVREYATLGDQLLEAARAYADEVGSGAFPGEVESY</sequence>
<accession>Q8FUA5</accession>